<reference key="1">
    <citation type="journal article" date="2006" name="Genome Res.">
        <title>Massive genome erosion and functional adaptations provide insights into the symbiotic lifestyle of Sodalis glossinidius in the tsetse host.</title>
        <authorList>
            <person name="Toh H."/>
            <person name="Weiss B.L."/>
            <person name="Perkin S.A.H."/>
            <person name="Yamashita A."/>
            <person name="Oshima K."/>
            <person name="Hattori M."/>
            <person name="Aksoy S."/>
        </authorList>
    </citation>
    <scope>NUCLEOTIDE SEQUENCE [LARGE SCALE GENOMIC DNA]</scope>
    <source>
        <strain>morsitans</strain>
    </source>
</reference>
<accession>Q2NUC6</accession>
<name>DCD_SODGM</name>
<protein>
    <recommendedName>
        <fullName evidence="1">dCTP deaminase</fullName>
        <ecNumber evidence="1">3.5.4.13</ecNumber>
    </recommendedName>
    <alternativeName>
        <fullName evidence="1">Deoxycytidine triphosphate deaminase</fullName>
    </alternativeName>
</protein>
<evidence type="ECO:0000255" key="1">
    <source>
        <dbReference type="HAMAP-Rule" id="MF_00146"/>
    </source>
</evidence>
<evidence type="ECO:0000256" key="2">
    <source>
        <dbReference type="SAM" id="MobiDB-lite"/>
    </source>
</evidence>
<feature type="chain" id="PRO_1000009820" description="dCTP deaminase">
    <location>
        <begin position="1"/>
        <end position="193"/>
    </location>
</feature>
<feature type="region of interest" description="Disordered" evidence="2">
    <location>
        <begin position="169"/>
        <end position="193"/>
    </location>
</feature>
<feature type="active site" description="Proton donor/acceptor" evidence="1">
    <location>
        <position position="138"/>
    </location>
</feature>
<feature type="binding site" evidence="1">
    <location>
        <begin position="110"/>
        <end position="115"/>
    </location>
    <ligand>
        <name>dCTP</name>
        <dbReference type="ChEBI" id="CHEBI:61481"/>
    </ligand>
</feature>
<feature type="binding site" evidence="1">
    <location>
        <position position="128"/>
    </location>
    <ligand>
        <name>dCTP</name>
        <dbReference type="ChEBI" id="CHEBI:61481"/>
    </ligand>
</feature>
<feature type="binding site" evidence="1">
    <location>
        <begin position="136"/>
        <end position="138"/>
    </location>
    <ligand>
        <name>dCTP</name>
        <dbReference type="ChEBI" id="CHEBI:61481"/>
    </ligand>
</feature>
<feature type="binding site" evidence="1">
    <location>
        <position position="171"/>
    </location>
    <ligand>
        <name>dCTP</name>
        <dbReference type="ChEBI" id="CHEBI:61481"/>
    </ligand>
</feature>
<feature type="binding site" evidence="1">
    <location>
        <position position="178"/>
    </location>
    <ligand>
        <name>dCTP</name>
        <dbReference type="ChEBI" id="CHEBI:61481"/>
    </ligand>
</feature>
<feature type="binding site" evidence="1">
    <location>
        <position position="182"/>
    </location>
    <ligand>
        <name>dCTP</name>
        <dbReference type="ChEBI" id="CHEBI:61481"/>
    </ligand>
</feature>
<proteinExistence type="inferred from homology"/>
<gene>
    <name evidence="1" type="primary">dcd</name>
    <name type="ordered locus">SG0974</name>
</gene>
<sequence>MRLCDRDIEIWLDEGRLDIAPRPPIERINGATVDVRLGNQFRVFRGHTAAYIDLSGPKDEVTAALDRVMSDEIQLVEGEAFFLHPGELALAVTLESVTLPDDLVGWLDGRSSLARLGLMVHVTAHRIDPGWQGRIVLEFYNSGKLPLALRPGMLIGALSFEPLSGPAARPYNRREDAKYRNQQGAVASRIDKD</sequence>
<comment type="function">
    <text evidence="1">Catalyzes the deamination of dCTP to dUTP.</text>
</comment>
<comment type="catalytic activity">
    <reaction evidence="1">
        <text>dCTP + H2O + H(+) = dUTP + NH4(+)</text>
        <dbReference type="Rhea" id="RHEA:22680"/>
        <dbReference type="ChEBI" id="CHEBI:15377"/>
        <dbReference type="ChEBI" id="CHEBI:15378"/>
        <dbReference type="ChEBI" id="CHEBI:28938"/>
        <dbReference type="ChEBI" id="CHEBI:61481"/>
        <dbReference type="ChEBI" id="CHEBI:61555"/>
        <dbReference type="EC" id="3.5.4.13"/>
    </reaction>
</comment>
<comment type="pathway">
    <text evidence="1">Pyrimidine metabolism; dUMP biosynthesis; dUMP from dCTP (dUTP route): step 1/2.</text>
</comment>
<comment type="subunit">
    <text evidence="1">Homotrimer.</text>
</comment>
<comment type="similarity">
    <text evidence="1">Belongs to the dCTP deaminase family.</text>
</comment>
<keyword id="KW-0378">Hydrolase</keyword>
<keyword id="KW-0546">Nucleotide metabolism</keyword>
<keyword id="KW-0547">Nucleotide-binding</keyword>
<organism>
    <name type="scientific">Sodalis glossinidius (strain morsitans)</name>
    <dbReference type="NCBI Taxonomy" id="343509"/>
    <lineage>
        <taxon>Bacteria</taxon>
        <taxon>Pseudomonadati</taxon>
        <taxon>Pseudomonadota</taxon>
        <taxon>Gammaproteobacteria</taxon>
        <taxon>Enterobacterales</taxon>
        <taxon>Bruguierivoracaceae</taxon>
        <taxon>Sodalis</taxon>
    </lineage>
</organism>
<dbReference type="EC" id="3.5.4.13" evidence="1"/>
<dbReference type="EMBL" id="AP008232">
    <property type="protein sequence ID" value="BAE74249.1"/>
    <property type="molecule type" value="Genomic_DNA"/>
</dbReference>
<dbReference type="RefSeq" id="WP_011410835.1">
    <property type="nucleotide sequence ID" value="NC_007712.1"/>
</dbReference>
<dbReference type="SMR" id="Q2NUC6"/>
<dbReference type="STRING" id="343509.SG0974"/>
<dbReference type="KEGG" id="sgl:SG0974"/>
<dbReference type="eggNOG" id="COG0717">
    <property type="taxonomic scope" value="Bacteria"/>
</dbReference>
<dbReference type="HOGENOM" id="CLU_087476_2_0_6"/>
<dbReference type="OrthoDB" id="9780956at2"/>
<dbReference type="BioCyc" id="SGLO343509:SGP1_RS08380-MONOMER"/>
<dbReference type="UniPathway" id="UPA00610">
    <property type="reaction ID" value="UER00665"/>
</dbReference>
<dbReference type="Proteomes" id="UP000001932">
    <property type="component" value="Chromosome"/>
</dbReference>
<dbReference type="GO" id="GO:0008829">
    <property type="term" value="F:dCTP deaminase activity"/>
    <property type="evidence" value="ECO:0007669"/>
    <property type="project" value="UniProtKB-UniRule"/>
</dbReference>
<dbReference type="GO" id="GO:0000166">
    <property type="term" value="F:nucleotide binding"/>
    <property type="evidence" value="ECO:0007669"/>
    <property type="project" value="UniProtKB-KW"/>
</dbReference>
<dbReference type="GO" id="GO:0006226">
    <property type="term" value="P:dUMP biosynthetic process"/>
    <property type="evidence" value="ECO:0007669"/>
    <property type="project" value="UniProtKB-UniPathway"/>
</dbReference>
<dbReference type="GO" id="GO:0006229">
    <property type="term" value="P:dUTP biosynthetic process"/>
    <property type="evidence" value="ECO:0007669"/>
    <property type="project" value="UniProtKB-UniRule"/>
</dbReference>
<dbReference type="GO" id="GO:0015949">
    <property type="term" value="P:nucleobase-containing small molecule interconversion"/>
    <property type="evidence" value="ECO:0007669"/>
    <property type="project" value="TreeGrafter"/>
</dbReference>
<dbReference type="CDD" id="cd07557">
    <property type="entry name" value="trimeric_dUTPase"/>
    <property type="match status" value="1"/>
</dbReference>
<dbReference type="FunFam" id="2.70.40.10:FF:000003">
    <property type="entry name" value="dCTP deaminase"/>
    <property type="match status" value="1"/>
</dbReference>
<dbReference type="Gene3D" id="2.70.40.10">
    <property type="match status" value="1"/>
</dbReference>
<dbReference type="HAMAP" id="MF_00146">
    <property type="entry name" value="dCTP_deaminase"/>
    <property type="match status" value="1"/>
</dbReference>
<dbReference type="InterPro" id="IPR011962">
    <property type="entry name" value="dCTP_deaminase"/>
</dbReference>
<dbReference type="InterPro" id="IPR036157">
    <property type="entry name" value="dUTPase-like_sf"/>
</dbReference>
<dbReference type="InterPro" id="IPR033704">
    <property type="entry name" value="dUTPase_trimeric"/>
</dbReference>
<dbReference type="NCBIfam" id="TIGR02274">
    <property type="entry name" value="dCTP_deam"/>
    <property type="match status" value="1"/>
</dbReference>
<dbReference type="PANTHER" id="PTHR42680">
    <property type="entry name" value="DCTP DEAMINASE"/>
    <property type="match status" value="1"/>
</dbReference>
<dbReference type="PANTHER" id="PTHR42680:SF3">
    <property type="entry name" value="DCTP DEAMINASE"/>
    <property type="match status" value="1"/>
</dbReference>
<dbReference type="Pfam" id="PF22769">
    <property type="entry name" value="DCD"/>
    <property type="match status" value="1"/>
</dbReference>
<dbReference type="SUPFAM" id="SSF51283">
    <property type="entry name" value="dUTPase-like"/>
    <property type="match status" value="1"/>
</dbReference>